<name>CUTI_PHYCP</name>
<sequence length="210" mass="23175">MALQSLPCRHGSPTIRLTADTPIVPDSERLPLKRDEPGSRSMRSTFIPSSQCSNLSSATASSSRRRSCRRYQHGEAVASSSTRWRTKWNLFIICLLLLCLPGLAVRYMHDMFSPCISGVANSQHSSSQSPRSHCRSLVPSFIAIYSASVVLCALISCFLDPYETTLPLTNVTNCLTLFRSSGSLRSEHRCSTSDSRRSRQQLSITSRGSA</sequence>
<comment type="catalytic activity">
    <reaction>
        <text>cutin + H2O = cutin monomers.</text>
        <dbReference type="EC" id="3.1.1.74"/>
    </reaction>
</comment>
<comment type="caution">
    <text evidence="2">Does not belong to the cutinase family. We doubt this is really a cutinase.</text>
</comment>
<proteinExistence type="predicted"/>
<reference key="1">
    <citation type="journal article" date="1998" name="Curr. Genet.">
        <title>A cutinase-encoding gene from Phytophthora capsici isolated by differential-display RT-PCR.</title>
        <authorList>
            <person name="Munoz C.I."/>
            <person name="Bailey A.M."/>
        </authorList>
    </citation>
    <scope>NUCLEOTIDE SEQUENCE [GENOMIC DNA]</scope>
</reference>
<reference key="2">
    <citation type="submission" date="2004-07" db="EMBL/GenBank/DDBJ databases">
        <authorList>
            <person name="Munoz C.I."/>
            <person name="Bailey A.M."/>
        </authorList>
    </citation>
    <scope>SEQUENCE REVISION</scope>
</reference>
<protein>
    <recommendedName>
        <fullName>Putative cutinase</fullName>
        <ecNumber>3.1.1.74</ecNumber>
    </recommendedName>
    <alternativeName>
        <fullName>Cutin hydrolase</fullName>
    </alternativeName>
</protein>
<accession>P41754</accession>
<accession>Q01764</accession>
<evidence type="ECO:0000256" key="1">
    <source>
        <dbReference type="SAM" id="MobiDB-lite"/>
    </source>
</evidence>
<evidence type="ECO:0000305" key="2"/>
<organism>
    <name type="scientific">Phytophthora capsici</name>
    <dbReference type="NCBI Taxonomy" id="4784"/>
    <lineage>
        <taxon>Eukaryota</taxon>
        <taxon>Sar</taxon>
        <taxon>Stramenopiles</taxon>
        <taxon>Oomycota</taxon>
        <taxon>Peronosporales</taxon>
        <taxon>Peronosporaceae</taxon>
        <taxon>Phytophthora</taxon>
    </lineage>
</organism>
<keyword id="KW-0378">Hydrolase</keyword>
<keyword id="KW-0719">Serine esterase</keyword>
<feature type="chain" id="PRO_0000174188" description="Putative cutinase">
    <location>
        <begin position="1"/>
        <end position="210"/>
    </location>
</feature>
<feature type="region of interest" description="Disordered" evidence="1">
    <location>
        <begin position="26"/>
        <end position="58"/>
    </location>
</feature>
<feature type="compositionally biased region" description="Basic and acidic residues" evidence="1">
    <location>
        <begin position="26"/>
        <end position="38"/>
    </location>
</feature>
<feature type="compositionally biased region" description="Low complexity" evidence="1">
    <location>
        <begin position="49"/>
        <end position="58"/>
    </location>
</feature>
<dbReference type="EC" id="3.1.1.74"/>
<dbReference type="EMBL" id="X89452">
    <property type="protein sequence ID" value="CAA61622.1"/>
    <property type="molecule type" value="Genomic_DNA"/>
</dbReference>
<dbReference type="PIR" id="S57943">
    <property type="entry name" value="S57943"/>
</dbReference>
<dbReference type="GO" id="GO:0050525">
    <property type="term" value="F:cutinase activity"/>
    <property type="evidence" value="ECO:0007669"/>
    <property type="project" value="UniProtKB-EC"/>
</dbReference>